<protein>
    <recommendedName>
        <fullName evidence="1">1-deoxy-D-xylulose-5-phosphate synthase</fullName>
        <ecNumber evidence="1">2.2.1.7</ecNumber>
    </recommendedName>
    <alternativeName>
        <fullName evidence="1">1-deoxyxylulose-5-phosphate synthase</fullName>
        <shortName evidence="1">DXP synthase</shortName>
        <shortName evidence="1">DXPS</shortName>
    </alternativeName>
</protein>
<comment type="function">
    <text evidence="1">Catalyzes the acyloin condensation reaction between C atoms 2 and 3 of pyruvate and glyceraldehyde 3-phosphate to yield 1-deoxy-D-xylulose-5-phosphate (DXP).</text>
</comment>
<comment type="catalytic activity">
    <reaction evidence="1">
        <text>D-glyceraldehyde 3-phosphate + pyruvate + H(+) = 1-deoxy-D-xylulose 5-phosphate + CO2</text>
        <dbReference type="Rhea" id="RHEA:12605"/>
        <dbReference type="ChEBI" id="CHEBI:15361"/>
        <dbReference type="ChEBI" id="CHEBI:15378"/>
        <dbReference type="ChEBI" id="CHEBI:16526"/>
        <dbReference type="ChEBI" id="CHEBI:57792"/>
        <dbReference type="ChEBI" id="CHEBI:59776"/>
        <dbReference type="EC" id="2.2.1.7"/>
    </reaction>
</comment>
<comment type="cofactor">
    <cofactor evidence="1">
        <name>Mg(2+)</name>
        <dbReference type="ChEBI" id="CHEBI:18420"/>
    </cofactor>
    <text evidence="1">Binds 1 Mg(2+) ion per subunit.</text>
</comment>
<comment type="cofactor">
    <cofactor evidence="1">
        <name>thiamine diphosphate</name>
        <dbReference type="ChEBI" id="CHEBI:58937"/>
    </cofactor>
    <text evidence="1">Binds 1 thiamine pyrophosphate per subunit.</text>
</comment>
<comment type="pathway">
    <text evidence="1">Metabolic intermediate biosynthesis; 1-deoxy-D-xylulose 5-phosphate biosynthesis; 1-deoxy-D-xylulose 5-phosphate from D-glyceraldehyde 3-phosphate and pyruvate: step 1/1.</text>
</comment>
<comment type="subunit">
    <text evidence="1">Homodimer.</text>
</comment>
<comment type="similarity">
    <text evidence="1">Belongs to the transketolase family. DXPS subfamily.</text>
</comment>
<reference key="1">
    <citation type="journal article" date="2007" name="PLoS Genet.">
        <title>Patterns and implications of gene gain and loss in the evolution of Prochlorococcus.</title>
        <authorList>
            <person name="Kettler G.C."/>
            <person name="Martiny A.C."/>
            <person name="Huang K."/>
            <person name="Zucker J."/>
            <person name="Coleman M.L."/>
            <person name="Rodrigue S."/>
            <person name="Chen F."/>
            <person name="Lapidus A."/>
            <person name="Ferriera S."/>
            <person name="Johnson J."/>
            <person name="Steglich C."/>
            <person name="Church G.M."/>
            <person name="Richardson P."/>
            <person name="Chisholm S.W."/>
        </authorList>
    </citation>
    <scope>NUCLEOTIDE SEQUENCE [LARGE SCALE GENOMIC DNA]</scope>
    <source>
        <strain>MIT 9215</strain>
    </source>
</reference>
<name>DXS_PROM2</name>
<sequence length="629" mass="67992">MLLSELSHPNQLHGLTVSQLEEIACQIRERHLQVVSTSGGHLGPGLGVVELTLALYQTLDLDFDKVVWDVGHQGYPHKLITGRFSQFDSLRQQNGVAGYLKRSESKFDHFGAGHASTSISAALGMAIARDRKGDNYKCVAVIGDGALTGGMALEAINHAGHLPNTPLVVVLNDNDMSISPPVGALSSYLNKVRHSPPLQFLSDSVQESVKNIPLIGKDIPEELKNIKGSVRRLAVPKVGAVFEELGFTYMGPIDGHDIGNLINTFNAAHKLKKPVLVHVVTTKGKGYPYAEADQVGYHAQSSFDLTTGKSIPSKKPKPISYSKIFGQTLLKICEQDSKVVGITAAMATGTGLDILQKNIPDQYIDVGIAEQHAVTLAAGMSCDGLKPVVAIYSTFLQRAFDQLIHDVGIQNLPVSFVLDRAGIVGADGPTHQGQYDISYMRSIPNFVLMAPKDESELQRMLITSINHKGPTALRIPRGSGLGVAVMDEGWEPLNIGEAEILEEGNDILIIAYGSMVASALETAELLKAKNINSCIVNARFVKPLDKKLIMPLASRIQKVVTMEEGTLIGGFGSAIVELFNDNEINIPVYRIGIPDVLVDHASPDQSKEKLGLMPNQMADNIIKKFDLNN</sequence>
<accession>A8G4R9</accession>
<feature type="chain" id="PRO_1000059448" description="1-deoxy-D-xylulose-5-phosphate synthase">
    <location>
        <begin position="1"/>
        <end position="629"/>
    </location>
</feature>
<feature type="binding site" evidence="1">
    <location>
        <position position="72"/>
    </location>
    <ligand>
        <name>thiamine diphosphate</name>
        <dbReference type="ChEBI" id="CHEBI:58937"/>
    </ligand>
</feature>
<feature type="binding site" evidence="1">
    <location>
        <begin position="113"/>
        <end position="115"/>
    </location>
    <ligand>
        <name>thiamine diphosphate</name>
        <dbReference type="ChEBI" id="CHEBI:58937"/>
    </ligand>
</feature>
<feature type="binding site" evidence="1">
    <location>
        <position position="144"/>
    </location>
    <ligand>
        <name>Mg(2+)</name>
        <dbReference type="ChEBI" id="CHEBI:18420"/>
    </ligand>
</feature>
<feature type="binding site" evidence="1">
    <location>
        <begin position="145"/>
        <end position="146"/>
    </location>
    <ligand>
        <name>thiamine diphosphate</name>
        <dbReference type="ChEBI" id="CHEBI:58937"/>
    </ligand>
</feature>
<feature type="binding site" evidence="1">
    <location>
        <position position="174"/>
    </location>
    <ligand>
        <name>Mg(2+)</name>
        <dbReference type="ChEBI" id="CHEBI:18420"/>
    </ligand>
</feature>
<feature type="binding site" evidence="1">
    <location>
        <position position="174"/>
    </location>
    <ligand>
        <name>thiamine diphosphate</name>
        <dbReference type="ChEBI" id="CHEBI:58937"/>
    </ligand>
</feature>
<feature type="binding site" evidence="1">
    <location>
        <position position="287"/>
    </location>
    <ligand>
        <name>thiamine diphosphate</name>
        <dbReference type="ChEBI" id="CHEBI:58937"/>
    </ligand>
</feature>
<feature type="binding site" evidence="1">
    <location>
        <position position="370"/>
    </location>
    <ligand>
        <name>thiamine diphosphate</name>
        <dbReference type="ChEBI" id="CHEBI:58937"/>
    </ligand>
</feature>
<dbReference type="EC" id="2.2.1.7" evidence="1"/>
<dbReference type="EMBL" id="CP000825">
    <property type="protein sequence ID" value="ABV50600.1"/>
    <property type="molecule type" value="Genomic_DNA"/>
</dbReference>
<dbReference type="RefSeq" id="WP_012007688.1">
    <property type="nucleotide sequence ID" value="NC_009840.1"/>
</dbReference>
<dbReference type="SMR" id="A8G4R9"/>
<dbReference type="STRING" id="93060.P9215_09851"/>
<dbReference type="KEGG" id="pmh:P9215_09851"/>
<dbReference type="eggNOG" id="COG1154">
    <property type="taxonomic scope" value="Bacteria"/>
</dbReference>
<dbReference type="HOGENOM" id="CLU_009227_1_4_3"/>
<dbReference type="OrthoDB" id="9803371at2"/>
<dbReference type="UniPathway" id="UPA00064">
    <property type="reaction ID" value="UER00091"/>
</dbReference>
<dbReference type="Proteomes" id="UP000002014">
    <property type="component" value="Chromosome"/>
</dbReference>
<dbReference type="GO" id="GO:0005829">
    <property type="term" value="C:cytosol"/>
    <property type="evidence" value="ECO:0007669"/>
    <property type="project" value="TreeGrafter"/>
</dbReference>
<dbReference type="GO" id="GO:0008661">
    <property type="term" value="F:1-deoxy-D-xylulose-5-phosphate synthase activity"/>
    <property type="evidence" value="ECO:0007669"/>
    <property type="project" value="UniProtKB-UniRule"/>
</dbReference>
<dbReference type="GO" id="GO:0000287">
    <property type="term" value="F:magnesium ion binding"/>
    <property type="evidence" value="ECO:0007669"/>
    <property type="project" value="UniProtKB-UniRule"/>
</dbReference>
<dbReference type="GO" id="GO:0030976">
    <property type="term" value="F:thiamine pyrophosphate binding"/>
    <property type="evidence" value="ECO:0007669"/>
    <property type="project" value="UniProtKB-UniRule"/>
</dbReference>
<dbReference type="GO" id="GO:0052865">
    <property type="term" value="P:1-deoxy-D-xylulose 5-phosphate biosynthetic process"/>
    <property type="evidence" value="ECO:0007669"/>
    <property type="project" value="UniProtKB-UniPathway"/>
</dbReference>
<dbReference type="GO" id="GO:0019288">
    <property type="term" value="P:isopentenyl diphosphate biosynthetic process, methylerythritol 4-phosphate pathway"/>
    <property type="evidence" value="ECO:0007669"/>
    <property type="project" value="TreeGrafter"/>
</dbReference>
<dbReference type="GO" id="GO:0016114">
    <property type="term" value="P:terpenoid biosynthetic process"/>
    <property type="evidence" value="ECO:0007669"/>
    <property type="project" value="UniProtKB-UniRule"/>
</dbReference>
<dbReference type="GO" id="GO:0009228">
    <property type="term" value="P:thiamine biosynthetic process"/>
    <property type="evidence" value="ECO:0007669"/>
    <property type="project" value="UniProtKB-UniRule"/>
</dbReference>
<dbReference type="CDD" id="cd02007">
    <property type="entry name" value="TPP_DXS"/>
    <property type="match status" value="1"/>
</dbReference>
<dbReference type="CDD" id="cd07033">
    <property type="entry name" value="TPP_PYR_DXS_TK_like"/>
    <property type="match status" value="1"/>
</dbReference>
<dbReference type="FunFam" id="3.40.50.920:FF:000002">
    <property type="entry name" value="1-deoxy-D-xylulose-5-phosphate synthase"/>
    <property type="match status" value="1"/>
</dbReference>
<dbReference type="FunFam" id="3.40.50.970:FF:000005">
    <property type="entry name" value="1-deoxy-D-xylulose-5-phosphate synthase"/>
    <property type="match status" value="1"/>
</dbReference>
<dbReference type="Gene3D" id="3.40.50.920">
    <property type="match status" value="1"/>
</dbReference>
<dbReference type="Gene3D" id="3.40.50.970">
    <property type="match status" value="2"/>
</dbReference>
<dbReference type="HAMAP" id="MF_00315">
    <property type="entry name" value="DXP_synth"/>
    <property type="match status" value="1"/>
</dbReference>
<dbReference type="InterPro" id="IPR005477">
    <property type="entry name" value="Dxylulose-5-P_synthase"/>
</dbReference>
<dbReference type="InterPro" id="IPR029061">
    <property type="entry name" value="THDP-binding"/>
</dbReference>
<dbReference type="InterPro" id="IPR009014">
    <property type="entry name" value="Transketo_C/PFOR_II"/>
</dbReference>
<dbReference type="InterPro" id="IPR005475">
    <property type="entry name" value="Transketolase-like_Pyr-bd"/>
</dbReference>
<dbReference type="InterPro" id="IPR020826">
    <property type="entry name" value="Transketolase_BS"/>
</dbReference>
<dbReference type="InterPro" id="IPR033248">
    <property type="entry name" value="Transketolase_C"/>
</dbReference>
<dbReference type="InterPro" id="IPR049557">
    <property type="entry name" value="Transketolase_CS"/>
</dbReference>
<dbReference type="NCBIfam" id="TIGR00204">
    <property type="entry name" value="dxs"/>
    <property type="match status" value="1"/>
</dbReference>
<dbReference type="NCBIfam" id="NF003933">
    <property type="entry name" value="PRK05444.2-2"/>
    <property type="match status" value="1"/>
</dbReference>
<dbReference type="PANTHER" id="PTHR43322">
    <property type="entry name" value="1-D-DEOXYXYLULOSE 5-PHOSPHATE SYNTHASE-RELATED"/>
    <property type="match status" value="1"/>
</dbReference>
<dbReference type="PANTHER" id="PTHR43322:SF5">
    <property type="entry name" value="1-DEOXY-D-XYLULOSE-5-PHOSPHATE SYNTHASE, CHLOROPLASTIC"/>
    <property type="match status" value="1"/>
</dbReference>
<dbReference type="Pfam" id="PF13292">
    <property type="entry name" value="DXP_synthase_N"/>
    <property type="match status" value="1"/>
</dbReference>
<dbReference type="Pfam" id="PF02779">
    <property type="entry name" value="Transket_pyr"/>
    <property type="match status" value="1"/>
</dbReference>
<dbReference type="Pfam" id="PF02780">
    <property type="entry name" value="Transketolase_C"/>
    <property type="match status" value="1"/>
</dbReference>
<dbReference type="SMART" id="SM00861">
    <property type="entry name" value="Transket_pyr"/>
    <property type="match status" value="1"/>
</dbReference>
<dbReference type="SUPFAM" id="SSF52518">
    <property type="entry name" value="Thiamin diphosphate-binding fold (THDP-binding)"/>
    <property type="match status" value="2"/>
</dbReference>
<dbReference type="SUPFAM" id="SSF52922">
    <property type="entry name" value="TK C-terminal domain-like"/>
    <property type="match status" value="1"/>
</dbReference>
<dbReference type="PROSITE" id="PS00801">
    <property type="entry name" value="TRANSKETOLASE_1"/>
    <property type="match status" value="1"/>
</dbReference>
<dbReference type="PROSITE" id="PS00802">
    <property type="entry name" value="TRANSKETOLASE_2"/>
    <property type="match status" value="1"/>
</dbReference>
<proteinExistence type="inferred from homology"/>
<organism>
    <name type="scientific">Prochlorococcus marinus (strain MIT 9215)</name>
    <dbReference type="NCBI Taxonomy" id="93060"/>
    <lineage>
        <taxon>Bacteria</taxon>
        <taxon>Bacillati</taxon>
        <taxon>Cyanobacteriota</taxon>
        <taxon>Cyanophyceae</taxon>
        <taxon>Synechococcales</taxon>
        <taxon>Prochlorococcaceae</taxon>
        <taxon>Prochlorococcus</taxon>
    </lineage>
</organism>
<gene>
    <name evidence="1" type="primary">dxs</name>
    <name type="ordered locus">P9215_09851</name>
</gene>
<keyword id="KW-0414">Isoprene biosynthesis</keyword>
<keyword id="KW-0460">Magnesium</keyword>
<keyword id="KW-0479">Metal-binding</keyword>
<keyword id="KW-0784">Thiamine biosynthesis</keyword>
<keyword id="KW-0786">Thiamine pyrophosphate</keyword>
<keyword id="KW-0808">Transferase</keyword>
<evidence type="ECO:0000255" key="1">
    <source>
        <dbReference type="HAMAP-Rule" id="MF_00315"/>
    </source>
</evidence>